<dbReference type="EC" id="3.1.26.4" evidence="1"/>
<dbReference type="EMBL" id="CP000949">
    <property type="protein sequence ID" value="ACA74548.1"/>
    <property type="molecule type" value="Genomic_DNA"/>
</dbReference>
<dbReference type="SMR" id="B1JBP6"/>
<dbReference type="STRING" id="390235.PputW619_4068"/>
<dbReference type="KEGG" id="ppw:PputW619_4068"/>
<dbReference type="eggNOG" id="COG0164">
    <property type="taxonomic scope" value="Bacteria"/>
</dbReference>
<dbReference type="HOGENOM" id="CLU_036532_3_2_6"/>
<dbReference type="OrthoDB" id="9803420at2"/>
<dbReference type="GO" id="GO:0005737">
    <property type="term" value="C:cytoplasm"/>
    <property type="evidence" value="ECO:0007669"/>
    <property type="project" value="UniProtKB-SubCell"/>
</dbReference>
<dbReference type="GO" id="GO:0032299">
    <property type="term" value="C:ribonuclease H2 complex"/>
    <property type="evidence" value="ECO:0007669"/>
    <property type="project" value="TreeGrafter"/>
</dbReference>
<dbReference type="GO" id="GO:0030145">
    <property type="term" value="F:manganese ion binding"/>
    <property type="evidence" value="ECO:0007669"/>
    <property type="project" value="UniProtKB-UniRule"/>
</dbReference>
<dbReference type="GO" id="GO:0003723">
    <property type="term" value="F:RNA binding"/>
    <property type="evidence" value="ECO:0007669"/>
    <property type="project" value="InterPro"/>
</dbReference>
<dbReference type="GO" id="GO:0004523">
    <property type="term" value="F:RNA-DNA hybrid ribonuclease activity"/>
    <property type="evidence" value="ECO:0007669"/>
    <property type="project" value="UniProtKB-UniRule"/>
</dbReference>
<dbReference type="GO" id="GO:0043137">
    <property type="term" value="P:DNA replication, removal of RNA primer"/>
    <property type="evidence" value="ECO:0007669"/>
    <property type="project" value="TreeGrafter"/>
</dbReference>
<dbReference type="GO" id="GO:0006298">
    <property type="term" value="P:mismatch repair"/>
    <property type="evidence" value="ECO:0007669"/>
    <property type="project" value="TreeGrafter"/>
</dbReference>
<dbReference type="CDD" id="cd07182">
    <property type="entry name" value="RNase_HII_bacteria_HII_like"/>
    <property type="match status" value="1"/>
</dbReference>
<dbReference type="FunFam" id="3.30.420.10:FF:000006">
    <property type="entry name" value="Ribonuclease HII"/>
    <property type="match status" value="1"/>
</dbReference>
<dbReference type="Gene3D" id="3.30.420.10">
    <property type="entry name" value="Ribonuclease H-like superfamily/Ribonuclease H"/>
    <property type="match status" value="1"/>
</dbReference>
<dbReference type="HAMAP" id="MF_00052_B">
    <property type="entry name" value="RNase_HII_B"/>
    <property type="match status" value="1"/>
</dbReference>
<dbReference type="InterPro" id="IPR022898">
    <property type="entry name" value="RNase_HII"/>
</dbReference>
<dbReference type="InterPro" id="IPR001352">
    <property type="entry name" value="RNase_HII/HIII"/>
</dbReference>
<dbReference type="InterPro" id="IPR024567">
    <property type="entry name" value="RNase_HII/HIII_dom"/>
</dbReference>
<dbReference type="InterPro" id="IPR012337">
    <property type="entry name" value="RNaseH-like_sf"/>
</dbReference>
<dbReference type="InterPro" id="IPR036397">
    <property type="entry name" value="RNaseH_sf"/>
</dbReference>
<dbReference type="NCBIfam" id="NF000595">
    <property type="entry name" value="PRK00015.1-3"/>
    <property type="match status" value="1"/>
</dbReference>
<dbReference type="NCBIfam" id="NF000596">
    <property type="entry name" value="PRK00015.1-4"/>
    <property type="match status" value="1"/>
</dbReference>
<dbReference type="PANTHER" id="PTHR10954">
    <property type="entry name" value="RIBONUCLEASE H2 SUBUNIT A"/>
    <property type="match status" value="1"/>
</dbReference>
<dbReference type="PANTHER" id="PTHR10954:SF18">
    <property type="entry name" value="RIBONUCLEASE HII"/>
    <property type="match status" value="1"/>
</dbReference>
<dbReference type="Pfam" id="PF01351">
    <property type="entry name" value="RNase_HII"/>
    <property type="match status" value="1"/>
</dbReference>
<dbReference type="SUPFAM" id="SSF53098">
    <property type="entry name" value="Ribonuclease H-like"/>
    <property type="match status" value="1"/>
</dbReference>
<dbReference type="PROSITE" id="PS51975">
    <property type="entry name" value="RNASE_H_2"/>
    <property type="match status" value="1"/>
</dbReference>
<comment type="function">
    <text evidence="1">Endonuclease that specifically degrades the RNA of RNA-DNA hybrids.</text>
</comment>
<comment type="catalytic activity">
    <reaction evidence="1">
        <text>Endonucleolytic cleavage to 5'-phosphomonoester.</text>
        <dbReference type="EC" id="3.1.26.4"/>
    </reaction>
</comment>
<comment type="cofactor">
    <cofactor evidence="1">
        <name>Mn(2+)</name>
        <dbReference type="ChEBI" id="CHEBI:29035"/>
    </cofactor>
    <cofactor evidence="1">
        <name>Mg(2+)</name>
        <dbReference type="ChEBI" id="CHEBI:18420"/>
    </cofactor>
    <text evidence="1">Manganese or magnesium. Binds 1 divalent metal ion per monomer in the absence of substrate. May bind a second metal ion after substrate binding.</text>
</comment>
<comment type="subcellular location">
    <subcellularLocation>
        <location evidence="1">Cytoplasm</location>
    </subcellularLocation>
</comment>
<comment type="similarity">
    <text evidence="1">Belongs to the RNase HII family.</text>
</comment>
<proteinExistence type="inferred from homology"/>
<reference key="1">
    <citation type="submission" date="2008-02" db="EMBL/GenBank/DDBJ databases">
        <title>Complete sequence of Pseudomonas putida W619.</title>
        <authorList>
            <person name="Copeland A."/>
            <person name="Lucas S."/>
            <person name="Lapidus A."/>
            <person name="Barry K."/>
            <person name="Detter J.C."/>
            <person name="Glavina del Rio T."/>
            <person name="Dalin E."/>
            <person name="Tice H."/>
            <person name="Pitluck S."/>
            <person name="Chain P."/>
            <person name="Malfatti S."/>
            <person name="Shin M."/>
            <person name="Vergez L."/>
            <person name="Schmutz J."/>
            <person name="Larimer F."/>
            <person name="Land M."/>
            <person name="Hauser L."/>
            <person name="Kyrpides N."/>
            <person name="Kim E."/>
            <person name="Taghavi S."/>
            <person name="Vangronsveld D."/>
            <person name="van der Lelie D."/>
            <person name="Richardson P."/>
        </authorList>
    </citation>
    <scope>NUCLEOTIDE SEQUENCE [LARGE SCALE GENOMIC DNA]</scope>
    <source>
        <strain>W619</strain>
    </source>
</reference>
<accession>B1JBP6</accession>
<organism>
    <name type="scientific">Pseudomonas putida (strain W619)</name>
    <dbReference type="NCBI Taxonomy" id="390235"/>
    <lineage>
        <taxon>Bacteria</taxon>
        <taxon>Pseudomonadati</taxon>
        <taxon>Pseudomonadota</taxon>
        <taxon>Gammaproteobacteria</taxon>
        <taxon>Pseudomonadales</taxon>
        <taxon>Pseudomonadaceae</taxon>
        <taxon>Pseudomonas</taxon>
    </lineage>
</organism>
<name>RNH2_PSEPW</name>
<protein>
    <recommendedName>
        <fullName evidence="1">Ribonuclease HII</fullName>
        <shortName evidence="1">RNase HII</shortName>
        <ecNumber evidence="1">3.1.26.4</ecNumber>
    </recommendedName>
</protein>
<gene>
    <name evidence="1" type="primary">rnhB</name>
    <name type="ordered locus">PputW619_4068</name>
</gene>
<sequence>MQIGLDFNLVEDLVAGVDEVGRGPLCGAVVTAAVILDPARPILGLNDSKKLTEAKREALFDEICAKALSFCIARAEVEEIDRLNILQATMLAMQRAVEGLSVTPKLALIDGNRCPKLSVPAAPVIKGDSQVPAIAAASILAKVTRDREMSAFELIYPGYGMGGHKGYPTPVHLEALARLGPTPIHRRSFAPVRAAWEAREGITDSLI</sequence>
<feature type="chain" id="PRO_1000091643" description="Ribonuclease HII">
    <location>
        <begin position="1"/>
        <end position="207"/>
    </location>
</feature>
<feature type="domain" description="RNase H type-2" evidence="2">
    <location>
        <begin position="12"/>
        <end position="201"/>
    </location>
</feature>
<feature type="binding site" evidence="1">
    <location>
        <position position="18"/>
    </location>
    <ligand>
        <name>a divalent metal cation</name>
        <dbReference type="ChEBI" id="CHEBI:60240"/>
    </ligand>
</feature>
<feature type="binding site" evidence="1">
    <location>
        <position position="19"/>
    </location>
    <ligand>
        <name>a divalent metal cation</name>
        <dbReference type="ChEBI" id="CHEBI:60240"/>
    </ligand>
</feature>
<feature type="binding site" evidence="1">
    <location>
        <position position="110"/>
    </location>
    <ligand>
        <name>a divalent metal cation</name>
        <dbReference type="ChEBI" id="CHEBI:60240"/>
    </ligand>
</feature>
<evidence type="ECO:0000255" key="1">
    <source>
        <dbReference type="HAMAP-Rule" id="MF_00052"/>
    </source>
</evidence>
<evidence type="ECO:0000255" key="2">
    <source>
        <dbReference type="PROSITE-ProRule" id="PRU01319"/>
    </source>
</evidence>
<keyword id="KW-0963">Cytoplasm</keyword>
<keyword id="KW-0255">Endonuclease</keyword>
<keyword id="KW-0378">Hydrolase</keyword>
<keyword id="KW-0464">Manganese</keyword>
<keyword id="KW-0479">Metal-binding</keyword>
<keyword id="KW-0540">Nuclease</keyword>